<organism>
    <name type="scientific">Streptococcus pneumoniae (strain ATCC BAA-255 / R6)</name>
    <dbReference type="NCBI Taxonomy" id="171101"/>
    <lineage>
        <taxon>Bacteria</taxon>
        <taxon>Bacillati</taxon>
        <taxon>Bacillota</taxon>
        <taxon>Bacilli</taxon>
        <taxon>Lactobacillales</taxon>
        <taxon>Streptococcaceae</taxon>
        <taxon>Streptococcus</taxon>
    </lineage>
</organism>
<reference key="1">
    <citation type="journal article" date="2001" name="J. Bacteriol.">
        <title>Genome of the bacterium Streptococcus pneumoniae strain R6.</title>
        <authorList>
            <person name="Hoskins J."/>
            <person name="Alborn W.E. Jr."/>
            <person name="Arnold J."/>
            <person name="Blaszczak L.C."/>
            <person name="Burgett S."/>
            <person name="DeHoff B.S."/>
            <person name="Estrem S.T."/>
            <person name="Fritz L."/>
            <person name="Fu D.-J."/>
            <person name="Fuller W."/>
            <person name="Geringer C."/>
            <person name="Gilmour R."/>
            <person name="Glass J.S."/>
            <person name="Khoja H."/>
            <person name="Kraft A.R."/>
            <person name="Lagace R.E."/>
            <person name="LeBlanc D.J."/>
            <person name="Lee L.N."/>
            <person name="Lefkowitz E.J."/>
            <person name="Lu J."/>
            <person name="Matsushima P."/>
            <person name="McAhren S.M."/>
            <person name="McHenney M."/>
            <person name="McLeaster K."/>
            <person name="Mundy C.W."/>
            <person name="Nicas T.I."/>
            <person name="Norris F.H."/>
            <person name="O'Gara M."/>
            <person name="Peery R.B."/>
            <person name="Robertson G.T."/>
            <person name="Rockey P."/>
            <person name="Sun P.-M."/>
            <person name="Winkler M.E."/>
            <person name="Yang Y."/>
            <person name="Young-Bellido M."/>
            <person name="Zhao G."/>
            <person name="Zook C.A."/>
            <person name="Baltz R.H."/>
            <person name="Jaskunas S.R."/>
            <person name="Rosteck P.R. Jr."/>
            <person name="Skatrud P.L."/>
            <person name="Glass J.I."/>
        </authorList>
    </citation>
    <scope>NUCLEOTIDE SEQUENCE [LARGE SCALE GENOMIC DNA]</scope>
    <source>
        <strain>ATCC BAA-255 / R6</strain>
    </source>
</reference>
<name>THIE1_STRR6</name>
<comment type="function">
    <text evidence="1">Condenses 4-methyl-5-(beta-hydroxyethyl)thiazole monophosphate (THZ-P) and 2-methyl-4-amino-5-hydroxymethyl pyrimidine pyrophosphate (HMP-PP) to form thiamine monophosphate (TMP).</text>
</comment>
<comment type="catalytic activity">
    <reaction evidence="1">
        <text>2-[(2R,5Z)-2-carboxy-4-methylthiazol-5(2H)-ylidene]ethyl phosphate + 4-amino-2-methyl-5-(diphosphooxymethyl)pyrimidine + 2 H(+) = thiamine phosphate + CO2 + diphosphate</text>
        <dbReference type="Rhea" id="RHEA:47844"/>
        <dbReference type="ChEBI" id="CHEBI:15378"/>
        <dbReference type="ChEBI" id="CHEBI:16526"/>
        <dbReference type="ChEBI" id="CHEBI:33019"/>
        <dbReference type="ChEBI" id="CHEBI:37575"/>
        <dbReference type="ChEBI" id="CHEBI:57841"/>
        <dbReference type="ChEBI" id="CHEBI:62899"/>
        <dbReference type="EC" id="2.5.1.3"/>
    </reaction>
</comment>
<comment type="catalytic activity">
    <reaction evidence="1">
        <text>2-(2-carboxy-4-methylthiazol-5-yl)ethyl phosphate + 4-amino-2-methyl-5-(diphosphooxymethyl)pyrimidine + 2 H(+) = thiamine phosphate + CO2 + diphosphate</text>
        <dbReference type="Rhea" id="RHEA:47848"/>
        <dbReference type="ChEBI" id="CHEBI:15378"/>
        <dbReference type="ChEBI" id="CHEBI:16526"/>
        <dbReference type="ChEBI" id="CHEBI:33019"/>
        <dbReference type="ChEBI" id="CHEBI:37575"/>
        <dbReference type="ChEBI" id="CHEBI:57841"/>
        <dbReference type="ChEBI" id="CHEBI:62890"/>
        <dbReference type="EC" id="2.5.1.3"/>
    </reaction>
</comment>
<comment type="catalytic activity">
    <reaction evidence="1">
        <text>4-methyl-5-(2-phosphooxyethyl)-thiazole + 4-amino-2-methyl-5-(diphosphooxymethyl)pyrimidine + H(+) = thiamine phosphate + diphosphate</text>
        <dbReference type="Rhea" id="RHEA:22328"/>
        <dbReference type="ChEBI" id="CHEBI:15378"/>
        <dbReference type="ChEBI" id="CHEBI:33019"/>
        <dbReference type="ChEBI" id="CHEBI:37575"/>
        <dbReference type="ChEBI" id="CHEBI:57841"/>
        <dbReference type="ChEBI" id="CHEBI:58296"/>
        <dbReference type="EC" id="2.5.1.3"/>
    </reaction>
</comment>
<comment type="cofactor">
    <cofactor evidence="1">
        <name>Mg(2+)</name>
        <dbReference type="ChEBI" id="CHEBI:18420"/>
    </cofactor>
    <text evidence="1">Binds 1 Mg(2+) ion per subunit.</text>
</comment>
<comment type="pathway">
    <text evidence="1">Cofactor biosynthesis; thiamine diphosphate biosynthesis; thiamine phosphate from 4-amino-2-methyl-5-diphosphomethylpyrimidine and 4-methyl-5-(2-phosphoethyl)-thiazole: step 1/1.</text>
</comment>
<comment type="similarity">
    <text evidence="1">Belongs to the thiamine-phosphate synthase family.</text>
</comment>
<sequence>MFHKELLKLYFICGTTTCQGKNLYTVVEEALKGGITLFQFREKGESALEGLEKLELAIQIKELCKKYNVPFIVNDDIDLAMEIDADGVHVGQDDIGVDEIRKLMPDKIIGLSIRNEEEFQQSKVEYVDYVGVGPVFDTQSKDDAGGAIGYEGLELMRKLLPQMPLVAIGGIQTKHIKDIIKTNMDGVSIISAISYAKNIEKTVREMSEQ</sequence>
<gene>
    <name evidence="1" type="primary">thiE1</name>
    <name type="ordered locus">spr0630</name>
</gene>
<accession>Q8DQK4</accession>
<evidence type="ECO:0000255" key="1">
    <source>
        <dbReference type="HAMAP-Rule" id="MF_00097"/>
    </source>
</evidence>
<proteinExistence type="inferred from homology"/>
<protein>
    <recommendedName>
        <fullName evidence="1">Thiamine-phosphate synthase 1</fullName>
        <shortName evidence="1">TP synthase 1</shortName>
        <shortName evidence="1">TPS 1</shortName>
        <ecNumber evidence="1">2.5.1.3</ecNumber>
    </recommendedName>
    <alternativeName>
        <fullName evidence="1">Thiamine-phosphate pyrophosphorylase 1</fullName>
        <shortName evidence="1">TMP pyrophosphorylase 1</shortName>
        <shortName evidence="1">TMP-PPase 1</shortName>
    </alternativeName>
</protein>
<feature type="chain" id="PRO_0000157056" description="Thiamine-phosphate synthase 1">
    <location>
        <begin position="1"/>
        <end position="209"/>
    </location>
</feature>
<feature type="binding site" evidence="1">
    <location>
        <begin position="39"/>
        <end position="43"/>
    </location>
    <ligand>
        <name>4-amino-2-methyl-5-(diphosphooxymethyl)pyrimidine</name>
        <dbReference type="ChEBI" id="CHEBI:57841"/>
    </ligand>
</feature>
<feature type="binding site" evidence="1">
    <location>
        <position position="74"/>
    </location>
    <ligand>
        <name>4-amino-2-methyl-5-(diphosphooxymethyl)pyrimidine</name>
        <dbReference type="ChEBI" id="CHEBI:57841"/>
    </ligand>
</feature>
<feature type="binding site" evidence="1">
    <location>
        <position position="75"/>
    </location>
    <ligand>
        <name>Mg(2+)</name>
        <dbReference type="ChEBI" id="CHEBI:18420"/>
    </ligand>
</feature>
<feature type="binding site" evidence="1">
    <location>
        <position position="94"/>
    </location>
    <ligand>
        <name>Mg(2+)</name>
        <dbReference type="ChEBI" id="CHEBI:18420"/>
    </ligand>
</feature>
<feature type="binding site" evidence="1">
    <location>
        <position position="112"/>
    </location>
    <ligand>
        <name>4-amino-2-methyl-5-(diphosphooxymethyl)pyrimidine</name>
        <dbReference type="ChEBI" id="CHEBI:57841"/>
    </ligand>
</feature>
<feature type="binding site" evidence="1">
    <location>
        <begin position="138"/>
        <end position="140"/>
    </location>
    <ligand>
        <name>2-[(2R,5Z)-2-carboxy-4-methylthiazol-5(2H)-ylidene]ethyl phosphate</name>
        <dbReference type="ChEBI" id="CHEBI:62899"/>
    </ligand>
</feature>
<feature type="binding site" evidence="1">
    <location>
        <position position="141"/>
    </location>
    <ligand>
        <name>4-amino-2-methyl-5-(diphosphooxymethyl)pyrimidine</name>
        <dbReference type="ChEBI" id="CHEBI:57841"/>
    </ligand>
</feature>
<feature type="binding site" evidence="1">
    <location>
        <position position="170"/>
    </location>
    <ligand>
        <name>2-[(2R,5Z)-2-carboxy-4-methylthiazol-5(2H)-ylidene]ethyl phosphate</name>
        <dbReference type="ChEBI" id="CHEBI:62899"/>
    </ligand>
</feature>
<feature type="binding site" evidence="1">
    <location>
        <begin position="190"/>
        <end position="191"/>
    </location>
    <ligand>
        <name>2-[(2R,5Z)-2-carboxy-4-methylthiazol-5(2H)-ylidene]ethyl phosphate</name>
        <dbReference type="ChEBI" id="CHEBI:62899"/>
    </ligand>
</feature>
<keyword id="KW-0460">Magnesium</keyword>
<keyword id="KW-0479">Metal-binding</keyword>
<keyword id="KW-1185">Reference proteome</keyword>
<keyword id="KW-0784">Thiamine biosynthesis</keyword>
<keyword id="KW-0808">Transferase</keyword>
<dbReference type="EC" id="2.5.1.3" evidence="1"/>
<dbReference type="EMBL" id="AE007317">
    <property type="protein sequence ID" value="AAK99434.1"/>
    <property type="molecule type" value="Genomic_DNA"/>
</dbReference>
<dbReference type="PIR" id="F97950">
    <property type="entry name" value="F97950"/>
</dbReference>
<dbReference type="RefSeq" id="NP_358224.1">
    <property type="nucleotide sequence ID" value="NC_003098.1"/>
</dbReference>
<dbReference type="RefSeq" id="WP_000468585.1">
    <property type="nucleotide sequence ID" value="NC_003098.1"/>
</dbReference>
<dbReference type="SMR" id="Q8DQK4"/>
<dbReference type="STRING" id="171101.spr0630"/>
<dbReference type="KEGG" id="spr:spr0630"/>
<dbReference type="PATRIC" id="fig|171101.6.peg.701"/>
<dbReference type="eggNOG" id="COG0352">
    <property type="taxonomic scope" value="Bacteria"/>
</dbReference>
<dbReference type="HOGENOM" id="CLU_018272_3_2_9"/>
<dbReference type="UniPathway" id="UPA00060">
    <property type="reaction ID" value="UER00141"/>
</dbReference>
<dbReference type="Proteomes" id="UP000000586">
    <property type="component" value="Chromosome"/>
</dbReference>
<dbReference type="GO" id="GO:0005737">
    <property type="term" value="C:cytoplasm"/>
    <property type="evidence" value="ECO:0000318"/>
    <property type="project" value="GO_Central"/>
</dbReference>
<dbReference type="GO" id="GO:0000287">
    <property type="term" value="F:magnesium ion binding"/>
    <property type="evidence" value="ECO:0007669"/>
    <property type="project" value="UniProtKB-UniRule"/>
</dbReference>
<dbReference type="GO" id="GO:0004789">
    <property type="term" value="F:thiamine-phosphate diphosphorylase activity"/>
    <property type="evidence" value="ECO:0000318"/>
    <property type="project" value="GO_Central"/>
</dbReference>
<dbReference type="GO" id="GO:0009228">
    <property type="term" value="P:thiamine biosynthetic process"/>
    <property type="evidence" value="ECO:0000318"/>
    <property type="project" value="GO_Central"/>
</dbReference>
<dbReference type="GO" id="GO:0009229">
    <property type="term" value="P:thiamine diphosphate biosynthetic process"/>
    <property type="evidence" value="ECO:0007669"/>
    <property type="project" value="UniProtKB-UniRule"/>
</dbReference>
<dbReference type="CDD" id="cd00564">
    <property type="entry name" value="TMP_TenI"/>
    <property type="match status" value="1"/>
</dbReference>
<dbReference type="FunFam" id="3.20.20.70:FF:000096">
    <property type="entry name" value="Thiamine-phosphate synthase"/>
    <property type="match status" value="1"/>
</dbReference>
<dbReference type="Gene3D" id="3.20.20.70">
    <property type="entry name" value="Aldolase class I"/>
    <property type="match status" value="1"/>
</dbReference>
<dbReference type="HAMAP" id="MF_00097">
    <property type="entry name" value="TMP_synthase"/>
    <property type="match status" value="1"/>
</dbReference>
<dbReference type="InterPro" id="IPR013785">
    <property type="entry name" value="Aldolase_TIM"/>
</dbReference>
<dbReference type="InterPro" id="IPR036206">
    <property type="entry name" value="ThiamineP_synth_sf"/>
</dbReference>
<dbReference type="InterPro" id="IPR022998">
    <property type="entry name" value="ThiamineP_synth_TenI"/>
</dbReference>
<dbReference type="InterPro" id="IPR034291">
    <property type="entry name" value="TMP_synthase"/>
</dbReference>
<dbReference type="NCBIfam" id="TIGR00693">
    <property type="entry name" value="thiE"/>
    <property type="match status" value="1"/>
</dbReference>
<dbReference type="PANTHER" id="PTHR20857">
    <property type="entry name" value="THIAMINE-PHOSPHATE PYROPHOSPHORYLASE"/>
    <property type="match status" value="1"/>
</dbReference>
<dbReference type="PANTHER" id="PTHR20857:SF15">
    <property type="entry name" value="THIAMINE-PHOSPHATE SYNTHASE"/>
    <property type="match status" value="1"/>
</dbReference>
<dbReference type="Pfam" id="PF02581">
    <property type="entry name" value="TMP-TENI"/>
    <property type="match status" value="1"/>
</dbReference>
<dbReference type="SUPFAM" id="SSF51391">
    <property type="entry name" value="Thiamin phosphate synthase"/>
    <property type="match status" value="1"/>
</dbReference>